<name>SSPH_ACET2</name>
<feature type="chain" id="PRO_0000329132" description="Small, acid-soluble spore protein H">
    <location>
        <begin position="1"/>
        <end position="64"/>
    </location>
</feature>
<gene>
    <name evidence="1" type="primary">sspH</name>
    <name type="ordered locus">Cthe_1179</name>
</gene>
<protein>
    <recommendedName>
        <fullName evidence="1">Small, acid-soluble spore protein H</fullName>
        <shortName evidence="1">SASP H</shortName>
    </recommendedName>
</protein>
<reference key="1">
    <citation type="submission" date="2007-02" db="EMBL/GenBank/DDBJ databases">
        <title>Complete sequence of Clostridium thermocellum ATCC 27405.</title>
        <authorList>
            <consortium name="US DOE Joint Genome Institute"/>
            <person name="Copeland A."/>
            <person name="Lucas S."/>
            <person name="Lapidus A."/>
            <person name="Barry K."/>
            <person name="Detter J.C."/>
            <person name="Glavina del Rio T."/>
            <person name="Hammon N."/>
            <person name="Israni S."/>
            <person name="Dalin E."/>
            <person name="Tice H."/>
            <person name="Pitluck S."/>
            <person name="Chertkov O."/>
            <person name="Brettin T."/>
            <person name="Bruce D."/>
            <person name="Han C."/>
            <person name="Tapia R."/>
            <person name="Gilna P."/>
            <person name="Schmutz J."/>
            <person name="Larimer F."/>
            <person name="Land M."/>
            <person name="Hauser L."/>
            <person name="Kyrpides N."/>
            <person name="Mikhailova N."/>
            <person name="Wu J.H.D."/>
            <person name="Newcomb M."/>
            <person name="Richardson P."/>
        </authorList>
    </citation>
    <scope>NUCLEOTIDE SEQUENCE [LARGE SCALE GENOMIC DNA]</scope>
    <source>
        <strain>ATCC 27405 / DSM 1237 / JCM 9322 / NBRC 103400 / NCIMB 10682 / NRRL B-4536 / VPI 7372</strain>
    </source>
</reference>
<evidence type="ECO:0000255" key="1">
    <source>
        <dbReference type="HAMAP-Rule" id="MF_00667"/>
    </source>
</evidence>
<comment type="subcellular location">
    <subcellularLocation>
        <location evidence="1">Spore core</location>
    </subcellularLocation>
</comment>
<comment type="similarity">
    <text evidence="1">Belongs to the SspH family.</text>
</comment>
<accession>A3DEN2</accession>
<proteinExistence type="inferred from homology"/>
<dbReference type="EMBL" id="CP000568">
    <property type="protein sequence ID" value="ABN52411.1"/>
    <property type="molecule type" value="Genomic_DNA"/>
</dbReference>
<dbReference type="RefSeq" id="WP_003519171.1">
    <property type="nucleotide sequence ID" value="NC_009012.1"/>
</dbReference>
<dbReference type="STRING" id="203119.Cthe_1179"/>
<dbReference type="GeneID" id="35803232"/>
<dbReference type="KEGG" id="cth:Cthe_1179"/>
<dbReference type="eggNOG" id="ENOG5030S3N">
    <property type="taxonomic scope" value="Bacteria"/>
</dbReference>
<dbReference type="HOGENOM" id="CLU_191960_1_0_9"/>
<dbReference type="OrthoDB" id="1683648at2"/>
<dbReference type="Proteomes" id="UP000002145">
    <property type="component" value="Chromosome"/>
</dbReference>
<dbReference type="GO" id="GO:0042601">
    <property type="term" value="C:endospore-forming forespore"/>
    <property type="evidence" value="ECO:0007669"/>
    <property type="project" value="InterPro"/>
</dbReference>
<dbReference type="GO" id="GO:0030436">
    <property type="term" value="P:asexual sporulation"/>
    <property type="evidence" value="ECO:0007669"/>
    <property type="project" value="InterPro"/>
</dbReference>
<dbReference type="GO" id="GO:0030435">
    <property type="term" value="P:sporulation resulting in formation of a cellular spore"/>
    <property type="evidence" value="ECO:0007669"/>
    <property type="project" value="UniProtKB-KW"/>
</dbReference>
<dbReference type="HAMAP" id="MF_00667">
    <property type="entry name" value="SspH"/>
    <property type="match status" value="1"/>
</dbReference>
<dbReference type="InterPro" id="IPR012610">
    <property type="entry name" value="SASP_SspH"/>
</dbReference>
<dbReference type="NCBIfam" id="TIGR02861">
    <property type="entry name" value="SASP_H"/>
    <property type="match status" value="1"/>
</dbReference>
<dbReference type="Pfam" id="PF08141">
    <property type="entry name" value="SspH"/>
    <property type="match status" value="1"/>
</dbReference>
<keyword id="KW-1185">Reference proteome</keyword>
<keyword id="KW-0749">Sporulation</keyword>
<sequence length="64" mass="7476">MDAARAQQIIESDQVIEVLHEGSPVWIEKVMDNNMAHVSYIHTKEEKDVPLYMLVEKELPKNFH</sequence>
<organism>
    <name type="scientific">Acetivibrio thermocellus (strain ATCC 27405 / DSM 1237 / JCM 9322 / NBRC 103400 / NCIMB 10682 / NRRL B-4536 / VPI 7372)</name>
    <name type="common">Clostridium thermocellum</name>
    <dbReference type="NCBI Taxonomy" id="203119"/>
    <lineage>
        <taxon>Bacteria</taxon>
        <taxon>Bacillati</taxon>
        <taxon>Bacillota</taxon>
        <taxon>Clostridia</taxon>
        <taxon>Eubacteriales</taxon>
        <taxon>Oscillospiraceae</taxon>
        <taxon>Acetivibrio</taxon>
    </lineage>
</organism>